<protein>
    <recommendedName>
        <fullName>Hainantoxin F8-35.23</fullName>
    </recommendedName>
    <alternativeName>
        <fullName>Peptide F8-35.23</fullName>
    </alternativeName>
</protein>
<sequence>TCSIPYEYSNGKLKRTLYYSNGVYANSFTENN</sequence>
<organism>
    <name type="scientific">Cyriopagopus hainanus</name>
    <name type="common">Chinese bird spider</name>
    <name type="synonym">Haplopelma hainanum</name>
    <dbReference type="NCBI Taxonomy" id="209901"/>
    <lineage>
        <taxon>Eukaryota</taxon>
        <taxon>Metazoa</taxon>
        <taxon>Ecdysozoa</taxon>
        <taxon>Arthropoda</taxon>
        <taxon>Chelicerata</taxon>
        <taxon>Arachnida</taxon>
        <taxon>Araneae</taxon>
        <taxon>Mygalomorphae</taxon>
        <taxon>Theraphosidae</taxon>
        <taxon>Haplopelma</taxon>
    </lineage>
</organism>
<name>HN835_CYRHA</name>
<reference key="1">
    <citation type="journal article" date="2010" name="J. Proteome Res.">
        <title>Molecular diversification of peptide toxins from the tarantula Haplopelma hainanum (Ornithoctonus hainana) venom based on transcriptomic, peptidomic, and genomic analyses.</title>
        <authorList>
            <person name="Tang X."/>
            <person name="Zhang Y."/>
            <person name="Hu W."/>
            <person name="Xu D."/>
            <person name="Tao H."/>
            <person name="Yang X."/>
            <person name="Li Y."/>
            <person name="Jiang L."/>
            <person name="Liang S."/>
        </authorList>
    </citation>
    <scope>PROTEIN SEQUENCE</scope>
    <scope>IDENTIFICATION BY MASS SPECTROMETRY</scope>
    <source>
        <tissue>Venom</tissue>
    </source>
</reference>
<keyword id="KW-0903">Direct protein sequencing</keyword>
<keyword id="KW-0964">Secreted</keyword>
<keyword id="KW-0800">Toxin</keyword>
<comment type="subcellular location">
    <subcellularLocation>
        <location>Secreted</location>
    </subcellularLocation>
</comment>
<comment type="tissue specificity">
    <text>Expressed by the venom gland.</text>
</comment>
<proteinExistence type="evidence at protein level"/>
<feature type="peptide" id="PRO_0000401058" description="Hainantoxin F8-35.23">
    <location>
        <begin position="1"/>
        <end position="32" status="greater than"/>
    </location>
</feature>
<feature type="non-terminal residue">
    <location>
        <position position="32"/>
    </location>
</feature>
<dbReference type="GO" id="GO:0005576">
    <property type="term" value="C:extracellular region"/>
    <property type="evidence" value="ECO:0007669"/>
    <property type="project" value="UniProtKB-SubCell"/>
</dbReference>
<dbReference type="GO" id="GO:0090729">
    <property type="term" value="F:toxin activity"/>
    <property type="evidence" value="ECO:0007669"/>
    <property type="project" value="UniProtKB-KW"/>
</dbReference>
<accession>P0CH78</accession>